<comment type="function">
    <text evidence="1">K(+)/H(+) antiporter that extrudes potassium in exchange for external protons and maintains the internal concentration of potassium under toxic levels.</text>
</comment>
<comment type="catalytic activity">
    <reaction evidence="1">
        <text>K(+)(in) + H(+)(out) = K(+)(out) + H(+)(in)</text>
        <dbReference type="Rhea" id="RHEA:29467"/>
        <dbReference type="ChEBI" id="CHEBI:15378"/>
        <dbReference type="ChEBI" id="CHEBI:29103"/>
    </reaction>
    <physiologicalReaction direction="left-to-right" evidence="1">
        <dbReference type="Rhea" id="RHEA:29468"/>
    </physiologicalReaction>
</comment>
<comment type="subcellular location">
    <subcellularLocation>
        <location evidence="1">Cell inner membrane</location>
        <topology evidence="1">Multi-pass membrane protein</topology>
    </subcellularLocation>
</comment>
<comment type="similarity">
    <text evidence="1">Belongs to the monovalent cation:proton antiporter 1 (CPA1) transporter (TC 2.A.36) family. NhaP2 subfamily.</text>
</comment>
<feature type="chain" id="PRO_1000136702" description="K(+)/H(+) antiporter NhaP2">
    <location>
        <begin position="1"/>
        <end position="578"/>
    </location>
</feature>
<feature type="transmembrane region" description="Helical" evidence="1">
    <location>
        <begin position="6"/>
        <end position="26"/>
    </location>
</feature>
<feature type="transmembrane region" description="Helical" evidence="1">
    <location>
        <begin position="30"/>
        <end position="50"/>
    </location>
</feature>
<feature type="transmembrane region" description="Helical" evidence="1">
    <location>
        <begin position="58"/>
        <end position="78"/>
    </location>
</feature>
<feature type="transmembrane region" description="Helical" evidence="1">
    <location>
        <begin position="87"/>
        <end position="107"/>
    </location>
</feature>
<feature type="transmembrane region" description="Helical" evidence="1">
    <location>
        <begin position="109"/>
        <end position="129"/>
    </location>
</feature>
<feature type="transmembrane region" description="Helical" evidence="1">
    <location>
        <begin position="156"/>
        <end position="176"/>
    </location>
</feature>
<feature type="transmembrane region" description="Helical" evidence="1">
    <location>
        <begin position="185"/>
        <end position="205"/>
    </location>
</feature>
<feature type="transmembrane region" description="Helical" evidence="1">
    <location>
        <begin position="216"/>
        <end position="236"/>
    </location>
</feature>
<feature type="transmembrane region" description="Helical" evidence="1">
    <location>
        <begin position="237"/>
        <end position="257"/>
    </location>
</feature>
<feature type="transmembrane region" description="Helical" evidence="1">
    <location>
        <begin position="270"/>
        <end position="290"/>
    </location>
</feature>
<feature type="transmembrane region" description="Helical" evidence="1">
    <location>
        <begin position="293"/>
        <end position="313"/>
    </location>
</feature>
<feature type="transmembrane region" description="Helical" evidence="1">
    <location>
        <begin position="334"/>
        <end position="354"/>
    </location>
</feature>
<feature type="transmembrane region" description="Helical" evidence="1">
    <location>
        <begin position="363"/>
        <end position="383"/>
    </location>
</feature>
<feature type="domain" description="RCK C-terminal" evidence="1">
    <location>
        <begin position="403"/>
        <end position="485"/>
    </location>
</feature>
<protein>
    <recommendedName>
        <fullName evidence="1">K(+)/H(+) antiporter NhaP2</fullName>
    </recommendedName>
    <alternativeName>
        <fullName evidence="1">Potassium/proton antiporter NhaP2</fullName>
    </alternativeName>
</protein>
<evidence type="ECO:0000255" key="1">
    <source>
        <dbReference type="HAMAP-Rule" id="MF_01075"/>
    </source>
</evidence>
<gene>
    <name evidence="1" type="primary">nhaP2</name>
    <name type="synonym">cvrA</name>
    <name type="ordered locus">ECIAI1_1209</name>
</gene>
<reference key="1">
    <citation type="journal article" date="2009" name="PLoS Genet.">
        <title>Organised genome dynamics in the Escherichia coli species results in highly diverse adaptive paths.</title>
        <authorList>
            <person name="Touchon M."/>
            <person name="Hoede C."/>
            <person name="Tenaillon O."/>
            <person name="Barbe V."/>
            <person name="Baeriswyl S."/>
            <person name="Bidet P."/>
            <person name="Bingen E."/>
            <person name="Bonacorsi S."/>
            <person name="Bouchier C."/>
            <person name="Bouvet O."/>
            <person name="Calteau A."/>
            <person name="Chiapello H."/>
            <person name="Clermont O."/>
            <person name="Cruveiller S."/>
            <person name="Danchin A."/>
            <person name="Diard M."/>
            <person name="Dossat C."/>
            <person name="Karoui M.E."/>
            <person name="Frapy E."/>
            <person name="Garry L."/>
            <person name="Ghigo J.M."/>
            <person name="Gilles A.M."/>
            <person name="Johnson J."/>
            <person name="Le Bouguenec C."/>
            <person name="Lescat M."/>
            <person name="Mangenot S."/>
            <person name="Martinez-Jehanne V."/>
            <person name="Matic I."/>
            <person name="Nassif X."/>
            <person name="Oztas S."/>
            <person name="Petit M.A."/>
            <person name="Pichon C."/>
            <person name="Rouy Z."/>
            <person name="Ruf C.S."/>
            <person name="Schneider D."/>
            <person name="Tourret J."/>
            <person name="Vacherie B."/>
            <person name="Vallenet D."/>
            <person name="Medigue C."/>
            <person name="Rocha E.P.C."/>
            <person name="Denamur E."/>
        </authorList>
    </citation>
    <scope>NUCLEOTIDE SEQUENCE [LARGE SCALE GENOMIC DNA]</scope>
    <source>
        <strain>IAI1</strain>
    </source>
</reference>
<keyword id="KW-0050">Antiport</keyword>
<keyword id="KW-0997">Cell inner membrane</keyword>
<keyword id="KW-1003">Cell membrane</keyword>
<keyword id="KW-0406">Ion transport</keyword>
<keyword id="KW-0472">Membrane</keyword>
<keyword id="KW-0630">Potassium</keyword>
<keyword id="KW-0633">Potassium transport</keyword>
<keyword id="KW-0812">Transmembrane</keyword>
<keyword id="KW-1133">Transmembrane helix</keyword>
<keyword id="KW-0813">Transport</keyword>
<accession>B7LXA5</accession>
<name>NHAP2_ECO8A</name>
<organism>
    <name type="scientific">Escherichia coli O8 (strain IAI1)</name>
    <dbReference type="NCBI Taxonomy" id="585034"/>
    <lineage>
        <taxon>Bacteria</taxon>
        <taxon>Pseudomonadati</taxon>
        <taxon>Pseudomonadota</taxon>
        <taxon>Gammaproteobacteria</taxon>
        <taxon>Enterobacterales</taxon>
        <taxon>Enterobacteriaceae</taxon>
        <taxon>Escherichia</taxon>
    </lineage>
</organism>
<dbReference type="EMBL" id="CU928160">
    <property type="protein sequence ID" value="CAQ98070.1"/>
    <property type="molecule type" value="Genomic_DNA"/>
</dbReference>
<dbReference type="RefSeq" id="WP_000340206.1">
    <property type="nucleotide sequence ID" value="NC_011741.1"/>
</dbReference>
<dbReference type="SMR" id="B7LXA5"/>
<dbReference type="KEGG" id="ecr:ECIAI1_1209"/>
<dbReference type="HOGENOM" id="CLU_005912_9_2_6"/>
<dbReference type="GO" id="GO:0005886">
    <property type="term" value="C:plasma membrane"/>
    <property type="evidence" value="ECO:0007669"/>
    <property type="project" value="UniProtKB-SubCell"/>
</dbReference>
<dbReference type="GO" id="GO:0050660">
    <property type="term" value="F:flavin adenine dinucleotide binding"/>
    <property type="evidence" value="ECO:0007669"/>
    <property type="project" value="InterPro"/>
</dbReference>
<dbReference type="GO" id="GO:0015386">
    <property type="term" value="F:potassium:proton antiporter activity"/>
    <property type="evidence" value="ECO:0007669"/>
    <property type="project" value="UniProtKB-UniRule"/>
</dbReference>
<dbReference type="GO" id="GO:0006884">
    <property type="term" value="P:cell volume homeostasis"/>
    <property type="evidence" value="ECO:0007669"/>
    <property type="project" value="InterPro"/>
</dbReference>
<dbReference type="FunFam" id="1.20.1530.20:FF:000002">
    <property type="entry name" value="K(+)/H(+) antiporter NhaP2"/>
    <property type="match status" value="1"/>
</dbReference>
<dbReference type="FunFam" id="3.30.465.10:FF:000009">
    <property type="entry name" value="K(+)/H(+) antiporter NhaP2"/>
    <property type="match status" value="1"/>
</dbReference>
<dbReference type="FunFam" id="3.30.70.1450:FF:000007">
    <property type="entry name" value="K(+)/H(+) antiporter NhaP2"/>
    <property type="match status" value="1"/>
</dbReference>
<dbReference type="Gene3D" id="1.20.1530.20">
    <property type="match status" value="1"/>
</dbReference>
<dbReference type="Gene3D" id="3.30.465.10">
    <property type="match status" value="1"/>
</dbReference>
<dbReference type="Gene3D" id="3.30.70.1450">
    <property type="entry name" value="Regulator of K+ conductance, C-terminal domain"/>
    <property type="match status" value="1"/>
</dbReference>
<dbReference type="HAMAP" id="MF_01075">
    <property type="entry name" value="NhaP2"/>
    <property type="match status" value="1"/>
</dbReference>
<dbReference type="InterPro" id="IPR006153">
    <property type="entry name" value="Cation/H_exchanger_TM"/>
</dbReference>
<dbReference type="InterPro" id="IPR036318">
    <property type="entry name" value="FAD-bd_PCMH-like_sf"/>
</dbReference>
<dbReference type="InterPro" id="IPR016169">
    <property type="entry name" value="FAD-bd_PCMH_sub2"/>
</dbReference>
<dbReference type="InterPro" id="IPR038770">
    <property type="entry name" value="Na+/solute_symporter_sf"/>
</dbReference>
<dbReference type="InterPro" id="IPR023729">
    <property type="entry name" value="NhaP2"/>
</dbReference>
<dbReference type="InterPro" id="IPR006037">
    <property type="entry name" value="RCK_C"/>
</dbReference>
<dbReference type="InterPro" id="IPR036721">
    <property type="entry name" value="RCK_C_sf"/>
</dbReference>
<dbReference type="InterPro" id="IPR005170">
    <property type="entry name" value="Transptr-assoc_dom"/>
</dbReference>
<dbReference type="NCBIfam" id="NF003714">
    <property type="entry name" value="PRK05326.1-1"/>
    <property type="match status" value="1"/>
</dbReference>
<dbReference type="NCBIfam" id="NF003715">
    <property type="entry name" value="PRK05326.1-2"/>
    <property type="match status" value="1"/>
</dbReference>
<dbReference type="NCBIfam" id="NF003716">
    <property type="entry name" value="PRK05326.1-3"/>
    <property type="match status" value="1"/>
</dbReference>
<dbReference type="PANTHER" id="PTHR32507:SF7">
    <property type="entry name" value="K(+)_H(+) ANTIPORTER NHAP2"/>
    <property type="match status" value="1"/>
</dbReference>
<dbReference type="PANTHER" id="PTHR32507">
    <property type="entry name" value="NA(+)/H(+) ANTIPORTER 1"/>
    <property type="match status" value="1"/>
</dbReference>
<dbReference type="Pfam" id="PF03471">
    <property type="entry name" value="CorC_HlyC"/>
    <property type="match status" value="1"/>
</dbReference>
<dbReference type="Pfam" id="PF00999">
    <property type="entry name" value="Na_H_Exchanger"/>
    <property type="match status" value="1"/>
</dbReference>
<dbReference type="Pfam" id="PF02080">
    <property type="entry name" value="TrkA_C"/>
    <property type="match status" value="1"/>
</dbReference>
<dbReference type="SMART" id="SM01091">
    <property type="entry name" value="CorC_HlyC"/>
    <property type="match status" value="1"/>
</dbReference>
<dbReference type="SUPFAM" id="SSF56176">
    <property type="entry name" value="FAD-binding/transporter-associated domain-like"/>
    <property type="match status" value="1"/>
</dbReference>
<dbReference type="SUPFAM" id="SSF116726">
    <property type="entry name" value="TrkA C-terminal domain-like"/>
    <property type="match status" value="1"/>
</dbReference>
<dbReference type="PROSITE" id="PS51202">
    <property type="entry name" value="RCK_C"/>
    <property type="match status" value="1"/>
</dbReference>
<proteinExistence type="inferred from homology"/>
<sequence>MDATTIISLFILGSILVTSSILLSSFSSRLGIPILVIFLAIGMLAGVDGVGGIPFDNYPFAYMVSNLALAIILLDGGMRTQASSFRVALGPALSLATLGVLITSGLTGMMAAWLFNLDLIEGLLIGAIVGSTDAAAVFSLLGGKGLNERVGSTLEIESGSNDPMAVFLTITLIAMIQQHESSVSWMFVVDILQQFGLGIVIGLGGGYLLLQMINRIALPAGLYPLLALSGGILIFALTTALEGSGILAVYLCGFLLGNRPIRNRYGILQNFDGLAWLAQIAMFLVLGLLVNPSDLLPIAIPALILSAWMIFFARPLSVFAGLLPFRGFNLRERVFISWVGLRGAVPIILAVFPMMAGLENARLFFNVAFFVVLVSLLLQGTSLSWAAKKAKVVVPPVGRPVSRVGLDIHPENPWEQFVYQLSADKWCVGAALRDLHMPKETRIAALFRDNQLLHPTGSTRLREGDVLCVIGRERDLPALGKLFSQSPPVALDQRFFGDFILEASAKYADVALIYGLEDGREYRDKQQTLGEIVQQLLGAAPVVGDQVEFAGMIWTVAEKEDNEVLKIGVRVAEEEAES</sequence>